<keyword id="KW-0963">Cytoplasm</keyword>
<keyword id="KW-0378">Hydrolase</keyword>
<keyword id="KW-1185">Reference proteome</keyword>
<sequence>MHLMPREQEKLMIVVAADLARRRQARGLKLNFPESVAIISYELIEGARDGRTVADLMSYGTTLLTRDDVMEGVPEMIHDVQIEATFPDGTKLVTVHDPIR</sequence>
<comment type="catalytic activity">
    <reaction evidence="1">
        <text>urea + 2 H2O + H(+) = hydrogencarbonate + 2 NH4(+)</text>
        <dbReference type="Rhea" id="RHEA:20557"/>
        <dbReference type="ChEBI" id="CHEBI:15377"/>
        <dbReference type="ChEBI" id="CHEBI:15378"/>
        <dbReference type="ChEBI" id="CHEBI:16199"/>
        <dbReference type="ChEBI" id="CHEBI:17544"/>
        <dbReference type="ChEBI" id="CHEBI:28938"/>
        <dbReference type="EC" id="3.5.1.5"/>
    </reaction>
</comment>
<comment type="pathway">
    <text evidence="1">Nitrogen metabolism; urea degradation; CO(2) and NH(3) from urea (urease route): step 1/1.</text>
</comment>
<comment type="subunit">
    <text evidence="1">Heterotrimer of UreA (gamma), UreB (beta) and UreC (alpha) subunits. Three heterotrimers associate to form the active enzyme.</text>
</comment>
<comment type="subcellular location">
    <subcellularLocation>
        <location evidence="1">Cytoplasm</location>
    </subcellularLocation>
</comment>
<comment type="similarity">
    <text evidence="1">Belongs to the urease gamma subunit family.</text>
</comment>
<accession>A0JRH2</accession>
<proteinExistence type="inferred from homology"/>
<organism>
    <name type="scientific">Arthrobacter sp. (strain FB24)</name>
    <dbReference type="NCBI Taxonomy" id="290399"/>
    <lineage>
        <taxon>Bacteria</taxon>
        <taxon>Bacillati</taxon>
        <taxon>Actinomycetota</taxon>
        <taxon>Actinomycetes</taxon>
        <taxon>Micrococcales</taxon>
        <taxon>Micrococcaceae</taxon>
        <taxon>Arthrobacter</taxon>
    </lineage>
</organism>
<name>URE3_ARTS2</name>
<evidence type="ECO:0000255" key="1">
    <source>
        <dbReference type="HAMAP-Rule" id="MF_00739"/>
    </source>
</evidence>
<feature type="chain" id="PRO_1000046310" description="Urease subunit gamma">
    <location>
        <begin position="1"/>
        <end position="100"/>
    </location>
</feature>
<protein>
    <recommendedName>
        <fullName evidence="1">Urease subunit gamma</fullName>
        <ecNumber evidence="1">3.5.1.5</ecNumber>
    </recommendedName>
    <alternativeName>
        <fullName evidence="1">Urea amidohydrolase subunit gamma</fullName>
    </alternativeName>
</protein>
<dbReference type="EC" id="3.5.1.5" evidence="1"/>
<dbReference type="EMBL" id="CP000454">
    <property type="protein sequence ID" value="ABK01642.1"/>
    <property type="molecule type" value="Genomic_DNA"/>
</dbReference>
<dbReference type="RefSeq" id="WP_011690112.1">
    <property type="nucleotide sequence ID" value="NC_008541.1"/>
</dbReference>
<dbReference type="SMR" id="A0JRH2"/>
<dbReference type="STRING" id="290399.Arth_0241"/>
<dbReference type="KEGG" id="art:Arth_0241"/>
<dbReference type="eggNOG" id="COG0831">
    <property type="taxonomic scope" value="Bacteria"/>
</dbReference>
<dbReference type="HOGENOM" id="CLU_145825_1_0_11"/>
<dbReference type="OrthoDB" id="9797217at2"/>
<dbReference type="UniPathway" id="UPA00258">
    <property type="reaction ID" value="UER00370"/>
</dbReference>
<dbReference type="Proteomes" id="UP000000754">
    <property type="component" value="Chromosome"/>
</dbReference>
<dbReference type="GO" id="GO:0005737">
    <property type="term" value="C:cytoplasm"/>
    <property type="evidence" value="ECO:0007669"/>
    <property type="project" value="UniProtKB-SubCell"/>
</dbReference>
<dbReference type="GO" id="GO:0016151">
    <property type="term" value="F:nickel cation binding"/>
    <property type="evidence" value="ECO:0007669"/>
    <property type="project" value="InterPro"/>
</dbReference>
<dbReference type="GO" id="GO:0009039">
    <property type="term" value="F:urease activity"/>
    <property type="evidence" value="ECO:0007669"/>
    <property type="project" value="UniProtKB-UniRule"/>
</dbReference>
<dbReference type="GO" id="GO:0043419">
    <property type="term" value="P:urea catabolic process"/>
    <property type="evidence" value="ECO:0007669"/>
    <property type="project" value="UniProtKB-UniRule"/>
</dbReference>
<dbReference type="CDD" id="cd00390">
    <property type="entry name" value="Urease_gamma"/>
    <property type="match status" value="1"/>
</dbReference>
<dbReference type="Gene3D" id="3.30.280.10">
    <property type="entry name" value="Urease, gamma-like subunit"/>
    <property type="match status" value="1"/>
</dbReference>
<dbReference type="HAMAP" id="MF_00739">
    <property type="entry name" value="Urease_gamma"/>
    <property type="match status" value="1"/>
</dbReference>
<dbReference type="InterPro" id="IPR012010">
    <property type="entry name" value="Urease_gamma"/>
</dbReference>
<dbReference type="InterPro" id="IPR002026">
    <property type="entry name" value="Urease_gamma/gamma-beta_su"/>
</dbReference>
<dbReference type="InterPro" id="IPR036463">
    <property type="entry name" value="Urease_gamma_sf"/>
</dbReference>
<dbReference type="InterPro" id="IPR050069">
    <property type="entry name" value="Urease_subunit"/>
</dbReference>
<dbReference type="NCBIfam" id="NF009712">
    <property type="entry name" value="PRK13241.1"/>
    <property type="match status" value="1"/>
</dbReference>
<dbReference type="NCBIfam" id="TIGR00193">
    <property type="entry name" value="urease_gam"/>
    <property type="match status" value="1"/>
</dbReference>
<dbReference type="PANTHER" id="PTHR33569">
    <property type="entry name" value="UREASE"/>
    <property type="match status" value="1"/>
</dbReference>
<dbReference type="PANTHER" id="PTHR33569:SF1">
    <property type="entry name" value="UREASE"/>
    <property type="match status" value="1"/>
</dbReference>
<dbReference type="Pfam" id="PF00547">
    <property type="entry name" value="Urease_gamma"/>
    <property type="match status" value="1"/>
</dbReference>
<dbReference type="PIRSF" id="PIRSF001223">
    <property type="entry name" value="Urease_gamma"/>
    <property type="match status" value="1"/>
</dbReference>
<dbReference type="SUPFAM" id="SSF54111">
    <property type="entry name" value="Urease, gamma-subunit"/>
    <property type="match status" value="1"/>
</dbReference>
<gene>
    <name evidence="1" type="primary">ureA</name>
    <name type="ordered locus">Arth_0241</name>
</gene>
<reference key="1">
    <citation type="journal article" date="2013" name="Stand. Genomic Sci.">
        <title>Complete genome sequence of Arthrobacter sp. strain FB24.</title>
        <authorList>
            <person name="Nakatsu C.H."/>
            <person name="Barabote R."/>
            <person name="Thompson S."/>
            <person name="Bruce D."/>
            <person name="Detter C."/>
            <person name="Brettin T."/>
            <person name="Han C."/>
            <person name="Beasley F."/>
            <person name="Chen W."/>
            <person name="Konopka A."/>
            <person name="Xie G."/>
        </authorList>
    </citation>
    <scope>NUCLEOTIDE SEQUENCE [LARGE SCALE GENOMIC DNA]</scope>
    <source>
        <strain>FB24</strain>
    </source>
</reference>